<dbReference type="EC" id="2.7.1.148" evidence="1"/>
<dbReference type="EMBL" id="AE017143">
    <property type="protein sequence ID" value="AAP96405.1"/>
    <property type="molecule type" value="Genomic_DNA"/>
</dbReference>
<dbReference type="RefSeq" id="WP_010945437.1">
    <property type="nucleotide sequence ID" value="NC_002940.2"/>
</dbReference>
<dbReference type="SMR" id="Q7VL54"/>
<dbReference type="STRING" id="233412.HD_1628"/>
<dbReference type="KEGG" id="hdu:HD_1628"/>
<dbReference type="eggNOG" id="COG1947">
    <property type="taxonomic scope" value="Bacteria"/>
</dbReference>
<dbReference type="HOGENOM" id="CLU_053057_3_0_6"/>
<dbReference type="OrthoDB" id="9809438at2"/>
<dbReference type="UniPathway" id="UPA00056">
    <property type="reaction ID" value="UER00094"/>
</dbReference>
<dbReference type="Proteomes" id="UP000001022">
    <property type="component" value="Chromosome"/>
</dbReference>
<dbReference type="GO" id="GO:0050515">
    <property type="term" value="F:4-(cytidine 5'-diphospho)-2-C-methyl-D-erythritol kinase activity"/>
    <property type="evidence" value="ECO:0007669"/>
    <property type="project" value="UniProtKB-UniRule"/>
</dbReference>
<dbReference type="GO" id="GO:0005524">
    <property type="term" value="F:ATP binding"/>
    <property type="evidence" value="ECO:0007669"/>
    <property type="project" value="UniProtKB-UniRule"/>
</dbReference>
<dbReference type="GO" id="GO:0019288">
    <property type="term" value="P:isopentenyl diphosphate biosynthetic process, methylerythritol 4-phosphate pathway"/>
    <property type="evidence" value="ECO:0007669"/>
    <property type="project" value="UniProtKB-UniRule"/>
</dbReference>
<dbReference type="GO" id="GO:0016114">
    <property type="term" value="P:terpenoid biosynthetic process"/>
    <property type="evidence" value="ECO:0007669"/>
    <property type="project" value="InterPro"/>
</dbReference>
<dbReference type="FunFam" id="3.30.230.10:FF:000022">
    <property type="entry name" value="4-diphosphocytidyl-2-C-methyl-D-erythritol kinase"/>
    <property type="match status" value="1"/>
</dbReference>
<dbReference type="Gene3D" id="3.30.230.10">
    <property type="match status" value="1"/>
</dbReference>
<dbReference type="Gene3D" id="3.30.70.890">
    <property type="entry name" value="GHMP kinase, C-terminal domain"/>
    <property type="match status" value="1"/>
</dbReference>
<dbReference type="HAMAP" id="MF_00061">
    <property type="entry name" value="IspE"/>
    <property type="match status" value="1"/>
</dbReference>
<dbReference type="InterPro" id="IPR013750">
    <property type="entry name" value="GHMP_kinase_C_dom"/>
</dbReference>
<dbReference type="InterPro" id="IPR036554">
    <property type="entry name" value="GHMP_kinase_C_sf"/>
</dbReference>
<dbReference type="InterPro" id="IPR006204">
    <property type="entry name" value="GHMP_kinase_N_dom"/>
</dbReference>
<dbReference type="InterPro" id="IPR004424">
    <property type="entry name" value="IspE"/>
</dbReference>
<dbReference type="InterPro" id="IPR020568">
    <property type="entry name" value="Ribosomal_Su5_D2-typ_SF"/>
</dbReference>
<dbReference type="InterPro" id="IPR014721">
    <property type="entry name" value="Ribsml_uS5_D2-typ_fold_subgr"/>
</dbReference>
<dbReference type="NCBIfam" id="TIGR00154">
    <property type="entry name" value="ispE"/>
    <property type="match status" value="1"/>
</dbReference>
<dbReference type="PANTHER" id="PTHR43527">
    <property type="entry name" value="4-DIPHOSPHOCYTIDYL-2-C-METHYL-D-ERYTHRITOL KINASE, CHLOROPLASTIC"/>
    <property type="match status" value="1"/>
</dbReference>
<dbReference type="PANTHER" id="PTHR43527:SF2">
    <property type="entry name" value="4-DIPHOSPHOCYTIDYL-2-C-METHYL-D-ERYTHRITOL KINASE, CHLOROPLASTIC"/>
    <property type="match status" value="1"/>
</dbReference>
<dbReference type="Pfam" id="PF08544">
    <property type="entry name" value="GHMP_kinases_C"/>
    <property type="match status" value="1"/>
</dbReference>
<dbReference type="Pfam" id="PF00288">
    <property type="entry name" value="GHMP_kinases_N"/>
    <property type="match status" value="1"/>
</dbReference>
<dbReference type="PIRSF" id="PIRSF010376">
    <property type="entry name" value="IspE"/>
    <property type="match status" value="1"/>
</dbReference>
<dbReference type="SUPFAM" id="SSF55060">
    <property type="entry name" value="GHMP Kinase, C-terminal domain"/>
    <property type="match status" value="1"/>
</dbReference>
<dbReference type="SUPFAM" id="SSF54211">
    <property type="entry name" value="Ribosomal protein S5 domain 2-like"/>
    <property type="match status" value="1"/>
</dbReference>
<feature type="chain" id="PRO_0000189222" description="4-diphosphocytidyl-2-C-methyl-D-erythritol kinase">
    <location>
        <begin position="1"/>
        <end position="282"/>
    </location>
</feature>
<feature type="active site" evidence="1">
    <location>
        <position position="11"/>
    </location>
</feature>
<feature type="active site" evidence="1">
    <location>
        <position position="137"/>
    </location>
</feature>
<feature type="binding site" evidence="1">
    <location>
        <begin position="95"/>
        <end position="105"/>
    </location>
    <ligand>
        <name>ATP</name>
        <dbReference type="ChEBI" id="CHEBI:30616"/>
    </ligand>
</feature>
<protein>
    <recommendedName>
        <fullName evidence="1">4-diphosphocytidyl-2-C-methyl-D-erythritol kinase</fullName>
        <shortName evidence="1">CMK</shortName>
        <ecNumber evidence="1">2.7.1.148</ecNumber>
    </recommendedName>
    <alternativeName>
        <fullName evidence="1">4-(cytidine-5'-diphospho)-2-C-methyl-D-erythritol kinase</fullName>
    </alternativeName>
</protein>
<comment type="function">
    <text evidence="1">Catalyzes the phosphorylation of the position 2 hydroxy group of 4-diphosphocytidyl-2C-methyl-D-erythritol.</text>
</comment>
<comment type="catalytic activity">
    <reaction evidence="1">
        <text>4-CDP-2-C-methyl-D-erythritol + ATP = 4-CDP-2-C-methyl-D-erythritol 2-phosphate + ADP + H(+)</text>
        <dbReference type="Rhea" id="RHEA:18437"/>
        <dbReference type="ChEBI" id="CHEBI:15378"/>
        <dbReference type="ChEBI" id="CHEBI:30616"/>
        <dbReference type="ChEBI" id="CHEBI:57823"/>
        <dbReference type="ChEBI" id="CHEBI:57919"/>
        <dbReference type="ChEBI" id="CHEBI:456216"/>
        <dbReference type="EC" id="2.7.1.148"/>
    </reaction>
</comment>
<comment type="pathway">
    <text evidence="1">Isoprenoid biosynthesis; isopentenyl diphosphate biosynthesis via DXP pathway; isopentenyl diphosphate from 1-deoxy-D-xylulose 5-phosphate: step 3/6.</text>
</comment>
<comment type="similarity">
    <text evidence="1">Belongs to the GHMP kinase family. IspE subfamily.</text>
</comment>
<reference key="1">
    <citation type="submission" date="2003-06" db="EMBL/GenBank/DDBJ databases">
        <title>The complete genome sequence of Haemophilus ducreyi.</title>
        <authorList>
            <person name="Munson R.S. Jr."/>
            <person name="Ray W.C."/>
            <person name="Mahairas G."/>
            <person name="Sabo P."/>
            <person name="Mungur R."/>
            <person name="Johnson L."/>
            <person name="Nguyen D."/>
            <person name="Wang J."/>
            <person name="Forst C."/>
            <person name="Hood L."/>
        </authorList>
    </citation>
    <scope>NUCLEOTIDE SEQUENCE [LARGE SCALE GENOMIC DNA]</scope>
    <source>
        <strain>35000HP / ATCC 700724</strain>
    </source>
</reference>
<keyword id="KW-0067">ATP-binding</keyword>
<keyword id="KW-0414">Isoprene biosynthesis</keyword>
<keyword id="KW-0418">Kinase</keyword>
<keyword id="KW-0547">Nucleotide-binding</keyword>
<keyword id="KW-1185">Reference proteome</keyword>
<keyword id="KW-0808">Transferase</keyword>
<accession>Q7VL54</accession>
<name>ISPE_HAEDU</name>
<sequence>MNRIILPSPAKLNLFLYINGRRADGYHQLQTLFQFLDVGDEIDISITTSNSTIELVNDIAGVATEDNLIYRAAKLLQKKTACQQGAKIAVAKHLPMGGGVGGGSSNAATVLVGLNYLWQTGLSLAQLAELGLSLGADVPIFVAGKTAFAEGIGEILTPCELPEKWYLVLKPNISIETSSIFKDPKLPRNTPERSLSALLAEDWGNDCEKVVREHYSEVEDLIQELLQYAPFRLTGTGACIFAEFASKAEAEKVFNCRPHNMYGFVAKGQNISPLHKKLNLFS</sequence>
<evidence type="ECO:0000255" key="1">
    <source>
        <dbReference type="HAMAP-Rule" id="MF_00061"/>
    </source>
</evidence>
<proteinExistence type="inferred from homology"/>
<gene>
    <name evidence="1" type="primary">ispE</name>
    <name type="ordered locus">HD_1628</name>
</gene>
<organism>
    <name type="scientific">Haemophilus ducreyi (strain 35000HP / ATCC 700724)</name>
    <dbReference type="NCBI Taxonomy" id="233412"/>
    <lineage>
        <taxon>Bacteria</taxon>
        <taxon>Pseudomonadati</taxon>
        <taxon>Pseudomonadota</taxon>
        <taxon>Gammaproteobacteria</taxon>
        <taxon>Pasteurellales</taxon>
        <taxon>Pasteurellaceae</taxon>
        <taxon>Haemophilus</taxon>
    </lineage>
</organism>